<gene>
    <name type="primary">cbc</name>
    <name type="ORF">CPIJ000183</name>
</gene>
<sequence>MGEEREATRTEYKLEMDSELRFEIENKNEKVTVTLMNGHAELFGTELVMRKPYEFGVGAKVAIFTYHGCTIELRGKPDVAYVARETPMVQYLNSNSALEHLRAKAEQDDTQGPVVMIVGPMDVGKTTLCRIFLNYAVRLGRRPIYVDLDVGQGGIAIPGTIGALLVERPAPVAEGFSQQAPLVYHFGHTSPSDNDVFYGVLISKLAETTLERLEANKKAKYSGMIINTCGWVKGGGYRHILHAIKAFEVNAVFVLDQERLYNELLRDVERAVQIVFLPKSGGVVERTKSQRAEARDNRVREYFYGSKMPLYPHSFDVKFSDVKIFKVGSPALPDSCLPLGMKREDNYTKLVAVQPGPQLLHHILAVSFAESTDDNVIQSNVAGFICVTNVSMEKEVLTILSPQPRPLPQTILLVSDFQFMDSH</sequence>
<reference key="1">
    <citation type="submission" date="2007-03" db="EMBL/GenBank/DDBJ databases">
        <title>Annotation of Culex pipiens quinquefasciatus.</title>
        <authorList>
            <consortium name="The Broad Institute Genome Sequencing Platform"/>
            <person name="Atkinson P.W."/>
            <person name="Hemingway J."/>
            <person name="Christensen B.M."/>
            <person name="Higgs S."/>
            <person name="Kodira C.D."/>
            <person name="Hannick L.I."/>
            <person name="Megy K."/>
            <person name="O'Leary S.B."/>
            <person name="Pearson M."/>
            <person name="Haas B.J."/>
            <person name="Mauceli E."/>
            <person name="Wortman J.R."/>
            <person name="Lee N.H."/>
            <person name="Guigo R."/>
            <person name="Stanke M."/>
            <person name="Alvarado L."/>
            <person name="Amedeo P."/>
            <person name="Antoine C.H."/>
            <person name="Arensburger P."/>
            <person name="Bidwell S.L."/>
            <person name="Crawford M."/>
            <person name="Camaro F."/>
            <person name="Devon K."/>
            <person name="Engels R."/>
            <person name="Hammond M."/>
            <person name="Howarth C."/>
            <person name="Koehrsen M."/>
            <person name="Lawson D."/>
            <person name="Montgomery P."/>
            <person name="Nene V."/>
            <person name="Nusbaum C."/>
            <person name="Puiu D."/>
            <person name="Romero-Severson J."/>
            <person name="Severson D.W."/>
            <person name="Shumway M."/>
            <person name="Sisk P."/>
            <person name="Stolte C."/>
            <person name="Zeng Q."/>
            <person name="Eisenstadt E."/>
            <person name="Fraser-Liggett C.M."/>
            <person name="Strausberg R."/>
            <person name="Galagan J."/>
            <person name="Birren B."/>
            <person name="Collins F.H."/>
        </authorList>
    </citation>
    <scope>NUCLEOTIDE SEQUENCE [LARGE SCALE GENOMIC DNA]</scope>
    <source>
        <strain>JHB</strain>
    </source>
</reference>
<evidence type="ECO:0000255" key="1">
    <source>
        <dbReference type="HAMAP-Rule" id="MF_03035"/>
    </source>
</evidence>
<comment type="function">
    <text evidence="1">Required for endonucleolytic cleavage during polyadenylation-dependent pre-mRNA 3'-end formation.</text>
</comment>
<comment type="subcellular location">
    <subcellularLocation>
        <location evidence="1">Nucleus</location>
    </subcellularLocation>
</comment>
<comment type="similarity">
    <text evidence="1">Belongs to the Clp1 family. Clp1 subfamily.</text>
</comment>
<protein>
    <recommendedName>
        <fullName evidence="1">Protein CLP1 homolog</fullName>
    </recommendedName>
</protein>
<name>CLP1_CULQU</name>
<organism>
    <name type="scientific">Culex quinquefasciatus</name>
    <name type="common">Southern house mosquito</name>
    <name type="synonym">Culex pungens</name>
    <dbReference type="NCBI Taxonomy" id="7176"/>
    <lineage>
        <taxon>Eukaryota</taxon>
        <taxon>Metazoa</taxon>
        <taxon>Ecdysozoa</taxon>
        <taxon>Arthropoda</taxon>
        <taxon>Hexapoda</taxon>
        <taxon>Insecta</taxon>
        <taxon>Pterygota</taxon>
        <taxon>Neoptera</taxon>
        <taxon>Endopterygota</taxon>
        <taxon>Diptera</taxon>
        <taxon>Nematocera</taxon>
        <taxon>Culicoidea</taxon>
        <taxon>Culicidae</taxon>
        <taxon>Culicinae</taxon>
        <taxon>Culicini</taxon>
        <taxon>Culex</taxon>
        <taxon>Culex</taxon>
    </lineage>
</organism>
<keyword id="KW-0067">ATP-binding</keyword>
<keyword id="KW-0507">mRNA processing</keyword>
<keyword id="KW-0547">Nucleotide-binding</keyword>
<keyword id="KW-0539">Nucleus</keyword>
<keyword id="KW-1185">Reference proteome</keyword>
<dbReference type="EMBL" id="DS231815">
    <property type="protein sequence ID" value="EDS35156.1"/>
    <property type="molecule type" value="Genomic_DNA"/>
</dbReference>
<dbReference type="RefSeq" id="XP_001841948.1">
    <property type="nucleotide sequence ID" value="XM_001841896.1"/>
</dbReference>
<dbReference type="SMR" id="B0VZR4"/>
<dbReference type="FunCoup" id="B0VZR4">
    <property type="interactions" value="1532"/>
</dbReference>
<dbReference type="STRING" id="7176.B0VZR4"/>
<dbReference type="EnsemblMetazoa" id="CPIJ000183-RA">
    <property type="protein sequence ID" value="CPIJ000183-PA"/>
    <property type="gene ID" value="CPIJ000183"/>
</dbReference>
<dbReference type="GeneID" id="6031101"/>
<dbReference type="KEGG" id="cqu:CpipJ_CPIJ000183"/>
<dbReference type="CTD" id="36494"/>
<dbReference type="VEuPathDB" id="VectorBase:CPIJ000183"/>
<dbReference type="VEuPathDB" id="VectorBase:CQUJHB008154"/>
<dbReference type="eggNOG" id="KOG2749">
    <property type="taxonomic scope" value="Eukaryota"/>
</dbReference>
<dbReference type="HOGENOM" id="CLU_018195_1_0_1"/>
<dbReference type="InParanoid" id="B0VZR4"/>
<dbReference type="OMA" id="VQYVNCH"/>
<dbReference type="OrthoDB" id="258143at2759"/>
<dbReference type="PhylomeDB" id="B0VZR4"/>
<dbReference type="Proteomes" id="UP000002320">
    <property type="component" value="Unassembled WGS sequence"/>
</dbReference>
<dbReference type="GO" id="GO:0005849">
    <property type="term" value="C:mRNA cleavage factor complex"/>
    <property type="evidence" value="ECO:0007669"/>
    <property type="project" value="InterPro"/>
</dbReference>
<dbReference type="GO" id="GO:0005524">
    <property type="term" value="F:ATP binding"/>
    <property type="evidence" value="ECO:0007669"/>
    <property type="project" value="UniProtKB-UniRule"/>
</dbReference>
<dbReference type="GO" id="GO:0051731">
    <property type="term" value="F:polynucleotide 5'-hydroxyl-kinase activity"/>
    <property type="evidence" value="ECO:0007669"/>
    <property type="project" value="InterPro"/>
</dbReference>
<dbReference type="GO" id="GO:0031124">
    <property type="term" value="P:mRNA 3'-end processing"/>
    <property type="evidence" value="ECO:0007669"/>
    <property type="project" value="UniProtKB-UniRule"/>
</dbReference>
<dbReference type="GO" id="GO:0006388">
    <property type="term" value="P:tRNA splicing, via endonucleolytic cleavage and ligation"/>
    <property type="evidence" value="ECO:0007669"/>
    <property type="project" value="TreeGrafter"/>
</dbReference>
<dbReference type="CDD" id="cd01983">
    <property type="entry name" value="SIMIBI"/>
    <property type="match status" value="1"/>
</dbReference>
<dbReference type="FunFam" id="2.40.30.330:FF:000001">
    <property type="entry name" value="Protein CLP1 homolog"/>
    <property type="match status" value="1"/>
</dbReference>
<dbReference type="FunFam" id="3.40.50.300:FF:000454">
    <property type="entry name" value="Protein CLP1 homolog"/>
    <property type="match status" value="1"/>
</dbReference>
<dbReference type="FunFam" id="2.60.120.1030:FF:000001">
    <property type="entry name" value="Protein CLP1 homolog 5"/>
    <property type="match status" value="1"/>
</dbReference>
<dbReference type="Gene3D" id="2.60.120.1030">
    <property type="entry name" value="Clp1, DNA binding domain"/>
    <property type="match status" value="1"/>
</dbReference>
<dbReference type="Gene3D" id="3.40.50.300">
    <property type="entry name" value="P-loop containing nucleotide triphosphate hydrolases"/>
    <property type="match status" value="1"/>
</dbReference>
<dbReference type="Gene3D" id="2.40.30.330">
    <property type="entry name" value="Pre-mRNA cleavage complex subunit Clp1, C-terminal domain"/>
    <property type="match status" value="1"/>
</dbReference>
<dbReference type="HAMAP" id="MF_03035">
    <property type="entry name" value="Clp1"/>
    <property type="match status" value="1"/>
</dbReference>
<dbReference type="InterPro" id="IPR028606">
    <property type="entry name" value="Clp1"/>
</dbReference>
<dbReference type="InterPro" id="IPR045116">
    <property type="entry name" value="Clp1/Grc3"/>
</dbReference>
<dbReference type="InterPro" id="IPR010655">
    <property type="entry name" value="Clp1_C"/>
</dbReference>
<dbReference type="InterPro" id="IPR038238">
    <property type="entry name" value="Clp1_C_sf"/>
</dbReference>
<dbReference type="InterPro" id="IPR032324">
    <property type="entry name" value="Clp1_N"/>
</dbReference>
<dbReference type="InterPro" id="IPR038239">
    <property type="entry name" value="Clp1_N_sf"/>
</dbReference>
<dbReference type="InterPro" id="IPR032319">
    <property type="entry name" value="CLP1_P"/>
</dbReference>
<dbReference type="InterPro" id="IPR027417">
    <property type="entry name" value="P-loop_NTPase"/>
</dbReference>
<dbReference type="PANTHER" id="PTHR12755">
    <property type="entry name" value="CLEAVAGE/POLYADENYLATION FACTOR IA SUBUNIT CLP1P"/>
    <property type="match status" value="1"/>
</dbReference>
<dbReference type="PANTHER" id="PTHR12755:SF6">
    <property type="entry name" value="POLYRIBONUCLEOTIDE 5'-HYDROXYL-KINASE CLP1"/>
    <property type="match status" value="1"/>
</dbReference>
<dbReference type="Pfam" id="PF06807">
    <property type="entry name" value="Clp1"/>
    <property type="match status" value="1"/>
</dbReference>
<dbReference type="Pfam" id="PF16573">
    <property type="entry name" value="CLP1_N"/>
    <property type="match status" value="1"/>
</dbReference>
<dbReference type="Pfam" id="PF16575">
    <property type="entry name" value="CLP1_P"/>
    <property type="match status" value="1"/>
</dbReference>
<dbReference type="SUPFAM" id="SSF52540">
    <property type="entry name" value="P-loop containing nucleoside triphosphate hydrolases"/>
    <property type="match status" value="1"/>
</dbReference>
<proteinExistence type="inferred from homology"/>
<feature type="chain" id="PRO_0000375176" description="Protein CLP1 homolog">
    <location>
        <begin position="1"/>
        <end position="423"/>
    </location>
</feature>
<feature type="binding site" evidence="1">
    <location>
        <position position="19"/>
    </location>
    <ligand>
        <name>ATP</name>
        <dbReference type="ChEBI" id="CHEBI:30616"/>
    </ligand>
</feature>
<feature type="binding site" evidence="1">
    <location>
        <position position="60"/>
    </location>
    <ligand>
        <name>ATP</name>
        <dbReference type="ChEBI" id="CHEBI:30616"/>
    </ligand>
</feature>
<feature type="binding site" evidence="1">
    <location>
        <begin position="122"/>
        <end position="127"/>
    </location>
    <ligand>
        <name>ATP</name>
        <dbReference type="ChEBI" id="CHEBI:30616"/>
    </ligand>
</feature>
<accession>B0VZR4</accession>